<proteinExistence type="inferred from homology"/>
<evidence type="ECO:0000255" key="1">
    <source>
        <dbReference type="HAMAP-Rule" id="MF_01396"/>
    </source>
</evidence>
<feature type="chain" id="PRO_1000184386" description="ATP synthase subunit c">
    <location>
        <begin position="1"/>
        <end position="84"/>
    </location>
</feature>
<feature type="transmembrane region" description="Helical" evidence="1">
    <location>
        <begin position="9"/>
        <end position="29"/>
    </location>
</feature>
<feature type="transmembrane region" description="Helical" evidence="1">
    <location>
        <begin position="54"/>
        <end position="74"/>
    </location>
</feature>
<feature type="site" description="Reversibly protonated during proton transport" evidence="1">
    <location>
        <position position="60"/>
    </location>
</feature>
<comment type="function">
    <text evidence="1">F(1)F(0) ATP synthase produces ATP from ADP in the presence of a proton or sodium gradient. F-type ATPases consist of two structural domains, F(1) containing the extramembraneous catalytic core and F(0) containing the membrane proton channel, linked together by a central stalk and a peripheral stalk. During catalysis, ATP synthesis in the catalytic domain of F(1) is coupled via a rotary mechanism of the central stalk subunits to proton translocation.</text>
</comment>
<comment type="function">
    <text evidence="1">Key component of the F(0) channel; it plays a direct role in translocation across the membrane. A homomeric c-ring of between 10-14 subunits forms the central stalk rotor element with the F(1) delta and epsilon subunits.</text>
</comment>
<comment type="subunit">
    <text evidence="1">F-type ATPases have 2 components, F(1) - the catalytic core - and F(0) - the membrane proton channel. F(1) has five subunits: alpha(3), beta(3), gamma(1), delta(1), epsilon(1). F(0) has three main subunits: a(1), b(2) and c(10-14). The alpha and beta chains form an alternating ring which encloses part of the gamma chain. F(1) is attached to F(0) by a central stalk formed by the gamma and epsilon chains, while a peripheral stalk is formed by the delta and b chains.</text>
</comment>
<comment type="subcellular location">
    <subcellularLocation>
        <location evidence="1">Cell inner membrane</location>
        <topology evidence="1">Multi-pass membrane protein</topology>
    </subcellularLocation>
</comment>
<comment type="similarity">
    <text evidence="1">Belongs to the ATPase C chain family.</text>
</comment>
<accession>A5UA06</accession>
<gene>
    <name evidence="1" type="primary">atpE</name>
    <name type="ordered locus">CGSHiEE_00565</name>
</gene>
<sequence length="84" mass="8664">METVITATIIGASILLAFAALGTAIGFAILGGKFLESSARQPELASSLQTKMFIVAGLLDAIAMIAVGISLLFIFANPFIGLLH</sequence>
<name>ATPL_HAEIE</name>
<organism>
    <name type="scientific">Haemophilus influenzae (strain PittEE)</name>
    <dbReference type="NCBI Taxonomy" id="374930"/>
    <lineage>
        <taxon>Bacteria</taxon>
        <taxon>Pseudomonadati</taxon>
        <taxon>Pseudomonadota</taxon>
        <taxon>Gammaproteobacteria</taxon>
        <taxon>Pasteurellales</taxon>
        <taxon>Pasteurellaceae</taxon>
        <taxon>Haemophilus</taxon>
    </lineage>
</organism>
<dbReference type="EMBL" id="CP000671">
    <property type="protein sequence ID" value="ABQ97607.1"/>
    <property type="molecule type" value="Genomic_DNA"/>
</dbReference>
<dbReference type="SMR" id="A5UA06"/>
<dbReference type="KEGG" id="hip:CGSHiEE_00565"/>
<dbReference type="HOGENOM" id="CLU_148047_1_0_6"/>
<dbReference type="GO" id="GO:0005886">
    <property type="term" value="C:plasma membrane"/>
    <property type="evidence" value="ECO:0007669"/>
    <property type="project" value="UniProtKB-SubCell"/>
</dbReference>
<dbReference type="GO" id="GO:0045259">
    <property type="term" value="C:proton-transporting ATP synthase complex"/>
    <property type="evidence" value="ECO:0007669"/>
    <property type="project" value="UniProtKB-KW"/>
</dbReference>
<dbReference type="GO" id="GO:0033177">
    <property type="term" value="C:proton-transporting two-sector ATPase complex, proton-transporting domain"/>
    <property type="evidence" value="ECO:0007669"/>
    <property type="project" value="InterPro"/>
</dbReference>
<dbReference type="GO" id="GO:0008289">
    <property type="term" value="F:lipid binding"/>
    <property type="evidence" value="ECO:0007669"/>
    <property type="project" value="UniProtKB-KW"/>
</dbReference>
<dbReference type="GO" id="GO:0046933">
    <property type="term" value="F:proton-transporting ATP synthase activity, rotational mechanism"/>
    <property type="evidence" value="ECO:0007669"/>
    <property type="project" value="UniProtKB-UniRule"/>
</dbReference>
<dbReference type="CDD" id="cd18185">
    <property type="entry name" value="ATP-synt_Fo_c_ATPE"/>
    <property type="match status" value="1"/>
</dbReference>
<dbReference type="FunFam" id="1.20.20.10:FF:000002">
    <property type="entry name" value="ATP synthase subunit c"/>
    <property type="match status" value="1"/>
</dbReference>
<dbReference type="Gene3D" id="1.20.20.10">
    <property type="entry name" value="F1F0 ATP synthase subunit C"/>
    <property type="match status" value="1"/>
</dbReference>
<dbReference type="HAMAP" id="MF_01396">
    <property type="entry name" value="ATP_synth_c_bact"/>
    <property type="match status" value="1"/>
</dbReference>
<dbReference type="InterPro" id="IPR005953">
    <property type="entry name" value="ATP_synth_csu_bac/chlpt"/>
</dbReference>
<dbReference type="InterPro" id="IPR000454">
    <property type="entry name" value="ATP_synth_F0_csu"/>
</dbReference>
<dbReference type="InterPro" id="IPR020537">
    <property type="entry name" value="ATP_synth_F0_csu_DDCD_BS"/>
</dbReference>
<dbReference type="InterPro" id="IPR038662">
    <property type="entry name" value="ATP_synth_F0_csu_sf"/>
</dbReference>
<dbReference type="InterPro" id="IPR002379">
    <property type="entry name" value="ATPase_proteolipid_c-like_dom"/>
</dbReference>
<dbReference type="InterPro" id="IPR035921">
    <property type="entry name" value="F/V-ATP_Csub_sf"/>
</dbReference>
<dbReference type="NCBIfam" id="TIGR01260">
    <property type="entry name" value="ATP_synt_c"/>
    <property type="match status" value="1"/>
</dbReference>
<dbReference type="NCBIfam" id="NF005363">
    <property type="entry name" value="PRK06876.1"/>
    <property type="match status" value="1"/>
</dbReference>
<dbReference type="Pfam" id="PF00137">
    <property type="entry name" value="ATP-synt_C"/>
    <property type="match status" value="1"/>
</dbReference>
<dbReference type="PRINTS" id="PR00124">
    <property type="entry name" value="ATPASEC"/>
</dbReference>
<dbReference type="SUPFAM" id="SSF81333">
    <property type="entry name" value="F1F0 ATP synthase subunit C"/>
    <property type="match status" value="1"/>
</dbReference>
<dbReference type="PROSITE" id="PS00605">
    <property type="entry name" value="ATPASE_C"/>
    <property type="match status" value="1"/>
</dbReference>
<protein>
    <recommendedName>
        <fullName evidence="1">ATP synthase subunit c</fullName>
    </recommendedName>
    <alternativeName>
        <fullName evidence="1">ATP synthase F(0) sector subunit c</fullName>
    </alternativeName>
    <alternativeName>
        <fullName evidence="1">F-type ATPase subunit c</fullName>
        <shortName evidence="1">F-ATPase subunit c</shortName>
    </alternativeName>
    <alternativeName>
        <fullName evidence="1">Lipid-binding protein</fullName>
    </alternativeName>
</protein>
<reference key="1">
    <citation type="journal article" date="2007" name="Genome Biol.">
        <title>Characterization and modeling of the Haemophilus influenzae core and supragenomes based on the complete genomic sequences of Rd and 12 clinical nontypeable strains.</title>
        <authorList>
            <person name="Hogg J.S."/>
            <person name="Hu F.Z."/>
            <person name="Janto B."/>
            <person name="Boissy R."/>
            <person name="Hayes J."/>
            <person name="Keefe R."/>
            <person name="Post J.C."/>
            <person name="Ehrlich G.D."/>
        </authorList>
    </citation>
    <scope>NUCLEOTIDE SEQUENCE [LARGE SCALE GENOMIC DNA]</scope>
    <source>
        <strain>PittEE</strain>
    </source>
</reference>
<keyword id="KW-0066">ATP synthesis</keyword>
<keyword id="KW-0997">Cell inner membrane</keyword>
<keyword id="KW-1003">Cell membrane</keyword>
<keyword id="KW-0138">CF(0)</keyword>
<keyword id="KW-0375">Hydrogen ion transport</keyword>
<keyword id="KW-0406">Ion transport</keyword>
<keyword id="KW-0446">Lipid-binding</keyword>
<keyword id="KW-0472">Membrane</keyword>
<keyword id="KW-0812">Transmembrane</keyword>
<keyword id="KW-1133">Transmembrane helix</keyword>
<keyword id="KW-0813">Transport</keyword>